<proteinExistence type="inferred from homology"/>
<comment type="function">
    <text evidence="1">Part of the phosphoribosylformylglycinamidine synthase complex involved in the purines biosynthetic pathway. Catalyzes the ATP-dependent conversion of formylglycinamide ribonucleotide (FGAR) and glutamine to yield formylglycinamidine ribonucleotide (FGAM) and glutamate. The FGAM synthase complex is composed of three subunits. PurQ produces an ammonia molecule by converting glutamine to glutamate. PurL transfers the ammonia molecule to FGAR to form FGAM in an ATP-dependent manner. PurS interacts with PurQ and PurL and is thought to assist in the transfer of the ammonia molecule from PurQ to PurL.</text>
</comment>
<comment type="catalytic activity">
    <reaction evidence="1">
        <text>N(2)-formyl-N(1)-(5-phospho-beta-D-ribosyl)glycinamide + L-glutamine + ATP + H2O = 2-formamido-N(1)-(5-O-phospho-beta-D-ribosyl)acetamidine + L-glutamate + ADP + phosphate + H(+)</text>
        <dbReference type="Rhea" id="RHEA:17129"/>
        <dbReference type="ChEBI" id="CHEBI:15377"/>
        <dbReference type="ChEBI" id="CHEBI:15378"/>
        <dbReference type="ChEBI" id="CHEBI:29985"/>
        <dbReference type="ChEBI" id="CHEBI:30616"/>
        <dbReference type="ChEBI" id="CHEBI:43474"/>
        <dbReference type="ChEBI" id="CHEBI:58359"/>
        <dbReference type="ChEBI" id="CHEBI:147286"/>
        <dbReference type="ChEBI" id="CHEBI:147287"/>
        <dbReference type="ChEBI" id="CHEBI:456216"/>
        <dbReference type="EC" id="6.3.5.3"/>
    </reaction>
</comment>
<comment type="catalytic activity">
    <reaction evidence="1">
        <text>L-glutamine + H2O = L-glutamate + NH4(+)</text>
        <dbReference type="Rhea" id="RHEA:15889"/>
        <dbReference type="ChEBI" id="CHEBI:15377"/>
        <dbReference type="ChEBI" id="CHEBI:28938"/>
        <dbReference type="ChEBI" id="CHEBI:29985"/>
        <dbReference type="ChEBI" id="CHEBI:58359"/>
        <dbReference type="EC" id="3.5.1.2"/>
    </reaction>
</comment>
<comment type="pathway">
    <text evidence="1">Purine metabolism; IMP biosynthesis via de novo pathway; 5-amino-1-(5-phospho-D-ribosyl)imidazole from N(2)-formyl-N(1)-(5-phospho-D-ribosyl)glycinamide: step 1/2.</text>
</comment>
<comment type="subunit">
    <text evidence="1">Part of the FGAM synthase complex composed of 1 PurL, 1 PurQ and 2 PurS subunits.</text>
</comment>
<comment type="subcellular location">
    <subcellularLocation>
        <location evidence="1">Cytoplasm</location>
    </subcellularLocation>
</comment>
<keyword id="KW-0067">ATP-binding</keyword>
<keyword id="KW-0963">Cytoplasm</keyword>
<keyword id="KW-0315">Glutamine amidotransferase</keyword>
<keyword id="KW-0378">Hydrolase</keyword>
<keyword id="KW-0436">Ligase</keyword>
<keyword id="KW-0547">Nucleotide-binding</keyword>
<keyword id="KW-0658">Purine biosynthesis</keyword>
<evidence type="ECO:0000255" key="1">
    <source>
        <dbReference type="HAMAP-Rule" id="MF_00421"/>
    </source>
</evidence>
<gene>
    <name evidence="1" type="primary">purQ</name>
    <name type="ordered locus">RPC_1587</name>
</gene>
<feature type="chain" id="PRO_0000252724" description="Phosphoribosylformylglycinamidine synthase subunit PurQ">
    <location>
        <begin position="1"/>
        <end position="233"/>
    </location>
</feature>
<feature type="domain" description="Glutamine amidotransferase type-1" evidence="1">
    <location>
        <begin position="3"/>
        <end position="233"/>
    </location>
</feature>
<feature type="active site" description="Nucleophile" evidence="1">
    <location>
        <position position="87"/>
    </location>
</feature>
<feature type="active site" evidence="1">
    <location>
        <position position="204"/>
    </location>
</feature>
<feature type="active site" evidence="1">
    <location>
        <position position="206"/>
    </location>
</feature>
<accession>Q218N7</accession>
<sequence length="233" mass="24845">MKSAILVFPGINRERDMARALQLASGSEPAMVWHADTELPKGTDLVVVPGGFSYGDYLRCGAIAARAPVMDAVRKFASDGGLVLGVCNGFQILCESGLLPGVLMRNARLKFICHDVHLRVERSDTPFTRGYNAGQVIRVPVAHGEGNYEADEETLQRLEGDGRVLYRYCSASGEVGEAHNINGAAASIAGIVSERGNVLGMMPHPENHVEAIMGCTDGRGLFAGLVEHLAKAA</sequence>
<organism>
    <name type="scientific">Rhodopseudomonas palustris (strain BisB18)</name>
    <dbReference type="NCBI Taxonomy" id="316056"/>
    <lineage>
        <taxon>Bacteria</taxon>
        <taxon>Pseudomonadati</taxon>
        <taxon>Pseudomonadota</taxon>
        <taxon>Alphaproteobacteria</taxon>
        <taxon>Hyphomicrobiales</taxon>
        <taxon>Nitrobacteraceae</taxon>
        <taxon>Rhodopseudomonas</taxon>
    </lineage>
</organism>
<reference key="1">
    <citation type="submission" date="2006-03" db="EMBL/GenBank/DDBJ databases">
        <title>Complete sequence of Rhodopseudomonas palustris BisB18.</title>
        <authorList>
            <consortium name="US DOE Joint Genome Institute"/>
            <person name="Copeland A."/>
            <person name="Lucas S."/>
            <person name="Lapidus A."/>
            <person name="Barry K."/>
            <person name="Detter J.C."/>
            <person name="Glavina del Rio T."/>
            <person name="Hammon N."/>
            <person name="Israni S."/>
            <person name="Dalin E."/>
            <person name="Tice H."/>
            <person name="Pitluck S."/>
            <person name="Chain P."/>
            <person name="Malfatti S."/>
            <person name="Shin M."/>
            <person name="Vergez L."/>
            <person name="Schmutz J."/>
            <person name="Larimer F."/>
            <person name="Land M."/>
            <person name="Hauser L."/>
            <person name="Pelletier D.A."/>
            <person name="Kyrpides N."/>
            <person name="Anderson I."/>
            <person name="Oda Y."/>
            <person name="Harwood C.S."/>
            <person name="Richardson P."/>
        </authorList>
    </citation>
    <scope>NUCLEOTIDE SEQUENCE [LARGE SCALE GENOMIC DNA]</scope>
    <source>
        <strain>BisB18</strain>
    </source>
</reference>
<dbReference type="EC" id="6.3.5.3" evidence="1"/>
<dbReference type="EC" id="3.5.1.2" evidence="1"/>
<dbReference type="EMBL" id="CP000301">
    <property type="protein sequence ID" value="ABD87149.1"/>
    <property type="molecule type" value="Genomic_DNA"/>
</dbReference>
<dbReference type="SMR" id="Q218N7"/>
<dbReference type="STRING" id="316056.RPC_1587"/>
<dbReference type="KEGG" id="rpc:RPC_1587"/>
<dbReference type="eggNOG" id="COG0047">
    <property type="taxonomic scope" value="Bacteria"/>
</dbReference>
<dbReference type="HOGENOM" id="CLU_001031_3_1_5"/>
<dbReference type="OrthoDB" id="9804441at2"/>
<dbReference type="UniPathway" id="UPA00074">
    <property type="reaction ID" value="UER00128"/>
</dbReference>
<dbReference type="GO" id="GO:0005737">
    <property type="term" value="C:cytoplasm"/>
    <property type="evidence" value="ECO:0007669"/>
    <property type="project" value="UniProtKB-SubCell"/>
</dbReference>
<dbReference type="GO" id="GO:0005524">
    <property type="term" value="F:ATP binding"/>
    <property type="evidence" value="ECO:0007669"/>
    <property type="project" value="UniProtKB-KW"/>
</dbReference>
<dbReference type="GO" id="GO:0004359">
    <property type="term" value="F:glutaminase activity"/>
    <property type="evidence" value="ECO:0007669"/>
    <property type="project" value="UniProtKB-EC"/>
</dbReference>
<dbReference type="GO" id="GO:0004642">
    <property type="term" value="F:phosphoribosylformylglycinamidine synthase activity"/>
    <property type="evidence" value="ECO:0007669"/>
    <property type="project" value="UniProtKB-UniRule"/>
</dbReference>
<dbReference type="GO" id="GO:0006189">
    <property type="term" value="P:'de novo' IMP biosynthetic process"/>
    <property type="evidence" value="ECO:0007669"/>
    <property type="project" value="UniProtKB-UniRule"/>
</dbReference>
<dbReference type="CDD" id="cd01740">
    <property type="entry name" value="GATase1_FGAR_AT"/>
    <property type="match status" value="1"/>
</dbReference>
<dbReference type="Gene3D" id="3.40.50.880">
    <property type="match status" value="1"/>
</dbReference>
<dbReference type="HAMAP" id="MF_00421">
    <property type="entry name" value="PurQ"/>
    <property type="match status" value="1"/>
</dbReference>
<dbReference type="InterPro" id="IPR029062">
    <property type="entry name" value="Class_I_gatase-like"/>
</dbReference>
<dbReference type="InterPro" id="IPR010075">
    <property type="entry name" value="PRibForGlyAmidine_synth_PurQ"/>
</dbReference>
<dbReference type="NCBIfam" id="TIGR01737">
    <property type="entry name" value="FGAM_synth_I"/>
    <property type="match status" value="1"/>
</dbReference>
<dbReference type="NCBIfam" id="NF002957">
    <property type="entry name" value="PRK03619.1"/>
    <property type="match status" value="1"/>
</dbReference>
<dbReference type="PANTHER" id="PTHR47552">
    <property type="entry name" value="PHOSPHORIBOSYLFORMYLGLYCINAMIDINE SYNTHASE SUBUNIT PURQ"/>
    <property type="match status" value="1"/>
</dbReference>
<dbReference type="PANTHER" id="PTHR47552:SF1">
    <property type="entry name" value="PHOSPHORIBOSYLFORMYLGLYCINAMIDINE SYNTHASE SUBUNIT PURQ"/>
    <property type="match status" value="1"/>
</dbReference>
<dbReference type="Pfam" id="PF13507">
    <property type="entry name" value="GATase_5"/>
    <property type="match status" value="1"/>
</dbReference>
<dbReference type="PIRSF" id="PIRSF001586">
    <property type="entry name" value="FGAM_synth_I"/>
    <property type="match status" value="1"/>
</dbReference>
<dbReference type="SMART" id="SM01211">
    <property type="entry name" value="GATase_5"/>
    <property type="match status" value="1"/>
</dbReference>
<dbReference type="SUPFAM" id="SSF52317">
    <property type="entry name" value="Class I glutamine amidotransferase-like"/>
    <property type="match status" value="1"/>
</dbReference>
<dbReference type="PROSITE" id="PS51273">
    <property type="entry name" value="GATASE_TYPE_1"/>
    <property type="match status" value="1"/>
</dbReference>
<name>PURQ_RHOPB</name>
<protein>
    <recommendedName>
        <fullName evidence="1">Phosphoribosylformylglycinamidine synthase subunit PurQ</fullName>
        <shortName evidence="1">FGAM synthase</shortName>
        <ecNumber evidence="1">6.3.5.3</ecNumber>
    </recommendedName>
    <alternativeName>
        <fullName evidence="1">Formylglycinamide ribonucleotide amidotransferase subunit I</fullName>
        <shortName evidence="1">FGAR amidotransferase I</shortName>
        <shortName evidence="1">FGAR-AT I</shortName>
    </alternativeName>
    <alternativeName>
        <fullName evidence="1">Glutaminase PurQ</fullName>
        <ecNumber evidence="1">3.5.1.2</ecNumber>
    </alternativeName>
    <alternativeName>
        <fullName evidence="1">Phosphoribosylformylglycinamidine synthase subunit I</fullName>
    </alternativeName>
</protein>